<name>YYCO_BACSU</name>
<reference key="1">
    <citation type="journal article" date="1997" name="DNA Res.">
        <title>Sequence analysis of the 36-kb region between gntZ and trnY genes of Bacillus subtilis genome.</title>
        <authorList>
            <person name="Kasahara Y."/>
            <person name="Nakai S."/>
            <person name="Ogasawara N."/>
        </authorList>
    </citation>
    <scope>NUCLEOTIDE SEQUENCE [GENOMIC DNA]</scope>
    <source>
        <strain>168</strain>
    </source>
</reference>
<reference key="2">
    <citation type="journal article" date="1997" name="Nature">
        <title>The complete genome sequence of the Gram-positive bacterium Bacillus subtilis.</title>
        <authorList>
            <person name="Kunst F."/>
            <person name="Ogasawara N."/>
            <person name="Moszer I."/>
            <person name="Albertini A.M."/>
            <person name="Alloni G."/>
            <person name="Azevedo V."/>
            <person name="Bertero M.G."/>
            <person name="Bessieres P."/>
            <person name="Bolotin A."/>
            <person name="Borchert S."/>
            <person name="Borriss R."/>
            <person name="Boursier L."/>
            <person name="Brans A."/>
            <person name="Braun M."/>
            <person name="Brignell S.C."/>
            <person name="Bron S."/>
            <person name="Brouillet S."/>
            <person name="Bruschi C.V."/>
            <person name="Caldwell B."/>
            <person name="Capuano V."/>
            <person name="Carter N.M."/>
            <person name="Choi S.-K."/>
            <person name="Codani J.-J."/>
            <person name="Connerton I.F."/>
            <person name="Cummings N.J."/>
            <person name="Daniel R.A."/>
            <person name="Denizot F."/>
            <person name="Devine K.M."/>
            <person name="Duesterhoeft A."/>
            <person name="Ehrlich S.D."/>
            <person name="Emmerson P.T."/>
            <person name="Entian K.-D."/>
            <person name="Errington J."/>
            <person name="Fabret C."/>
            <person name="Ferrari E."/>
            <person name="Foulger D."/>
            <person name="Fritz C."/>
            <person name="Fujita M."/>
            <person name="Fujita Y."/>
            <person name="Fuma S."/>
            <person name="Galizzi A."/>
            <person name="Galleron N."/>
            <person name="Ghim S.-Y."/>
            <person name="Glaser P."/>
            <person name="Goffeau A."/>
            <person name="Golightly E.J."/>
            <person name="Grandi G."/>
            <person name="Guiseppi G."/>
            <person name="Guy B.J."/>
            <person name="Haga K."/>
            <person name="Haiech J."/>
            <person name="Harwood C.R."/>
            <person name="Henaut A."/>
            <person name="Hilbert H."/>
            <person name="Holsappel S."/>
            <person name="Hosono S."/>
            <person name="Hullo M.-F."/>
            <person name="Itaya M."/>
            <person name="Jones L.-M."/>
            <person name="Joris B."/>
            <person name="Karamata D."/>
            <person name="Kasahara Y."/>
            <person name="Klaerr-Blanchard M."/>
            <person name="Klein C."/>
            <person name="Kobayashi Y."/>
            <person name="Koetter P."/>
            <person name="Koningstein G."/>
            <person name="Krogh S."/>
            <person name="Kumano M."/>
            <person name="Kurita K."/>
            <person name="Lapidus A."/>
            <person name="Lardinois S."/>
            <person name="Lauber J."/>
            <person name="Lazarevic V."/>
            <person name="Lee S.-M."/>
            <person name="Levine A."/>
            <person name="Liu H."/>
            <person name="Masuda S."/>
            <person name="Mauel C."/>
            <person name="Medigue C."/>
            <person name="Medina N."/>
            <person name="Mellado R.P."/>
            <person name="Mizuno M."/>
            <person name="Moestl D."/>
            <person name="Nakai S."/>
            <person name="Noback M."/>
            <person name="Noone D."/>
            <person name="O'Reilly M."/>
            <person name="Ogawa K."/>
            <person name="Ogiwara A."/>
            <person name="Oudega B."/>
            <person name="Park S.-H."/>
            <person name="Parro V."/>
            <person name="Pohl T.M."/>
            <person name="Portetelle D."/>
            <person name="Porwollik S."/>
            <person name="Prescott A.M."/>
            <person name="Presecan E."/>
            <person name="Pujic P."/>
            <person name="Purnelle B."/>
            <person name="Rapoport G."/>
            <person name="Rey M."/>
            <person name="Reynolds S."/>
            <person name="Rieger M."/>
            <person name="Rivolta C."/>
            <person name="Rocha E."/>
            <person name="Roche B."/>
            <person name="Rose M."/>
            <person name="Sadaie Y."/>
            <person name="Sato T."/>
            <person name="Scanlan E."/>
            <person name="Schleich S."/>
            <person name="Schroeter R."/>
            <person name="Scoffone F."/>
            <person name="Sekiguchi J."/>
            <person name="Sekowska A."/>
            <person name="Seror S.J."/>
            <person name="Serror P."/>
            <person name="Shin B.-S."/>
            <person name="Soldo B."/>
            <person name="Sorokin A."/>
            <person name="Tacconi E."/>
            <person name="Takagi T."/>
            <person name="Takahashi H."/>
            <person name="Takemaru K."/>
            <person name="Takeuchi M."/>
            <person name="Tamakoshi A."/>
            <person name="Tanaka T."/>
            <person name="Terpstra P."/>
            <person name="Tognoni A."/>
            <person name="Tosato V."/>
            <person name="Uchiyama S."/>
            <person name="Vandenbol M."/>
            <person name="Vannier F."/>
            <person name="Vassarotti A."/>
            <person name="Viari A."/>
            <person name="Wambutt R."/>
            <person name="Wedler E."/>
            <person name="Wedler H."/>
            <person name="Weitzenegger T."/>
            <person name="Winters P."/>
            <person name="Wipat A."/>
            <person name="Yamamoto H."/>
            <person name="Yamane K."/>
            <person name="Yasumoto K."/>
            <person name="Yata K."/>
            <person name="Yoshida K."/>
            <person name="Yoshikawa H.-F."/>
            <person name="Zumstein E."/>
            <person name="Yoshikawa H."/>
            <person name="Danchin A."/>
        </authorList>
    </citation>
    <scope>NUCLEOTIDE SEQUENCE [LARGE SCALE GENOMIC DNA]</scope>
    <source>
        <strain>168</strain>
    </source>
</reference>
<gene>
    <name type="primary">yycO</name>
    <name type="ordered locus">BSU40280</name>
</gene>
<sequence>MKLKKRVSMFLVALTMCGGLFVTPAKAVKTTNYAEEIAALQPGTTPEEIMKSASQIAKQQHVKQDVILKQFYKEITADKAEGDRLAKESGMSIMGGSSGTKKLPTSAKGNIYYTNSYTAYYNHGHVGMYSAADKIVESVPSDGVRQIAYNARDVEDNSIVQTVSVSSSQKTAAADWAVSKVGDPYSFNFVNNRNTGHDGAKNCSKLLWSAFLLKAGIDIDSNGGLGVYPRDITSSSYTTTIMTIY</sequence>
<keyword id="KW-1185">Reference proteome</keyword>
<keyword id="KW-0732">Signal</keyword>
<feature type="signal peptide" evidence="1">
    <location>
        <begin position="1"/>
        <end position="27"/>
    </location>
</feature>
<feature type="chain" id="PRO_0000378470" description="Uncharacterized protein YycO">
    <location>
        <begin position="28"/>
        <end position="245"/>
    </location>
</feature>
<proteinExistence type="inferred from homology"/>
<evidence type="ECO:0000255" key="1"/>
<dbReference type="EMBL" id="D78193">
    <property type="protein sequence ID" value="BAA11287.1"/>
    <property type="molecule type" value="Genomic_DNA"/>
</dbReference>
<dbReference type="EMBL" id="AL009126">
    <property type="protein sequence ID" value="CAB16065.1"/>
    <property type="molecule type" value="Genomic_DNA"/>
</dbReference>
<dbReference type="PIR" id="C70090">
    <property type="entry name" value="C70090"/>
</dbReference>
<dbReference type="RefSeq" id="NP_391908.1">
    <property type="nucleotide sequence ID" value="NC_000964.3"/>
</dbReference>
<dbReference type="RefSeq" id="WP_003243470.1">
    <property type="nucleotide sequence ID" value="NZ_OZ025638.1"/>
</dbReference>
<dbReference type="SMR" id="Q45607"/>
<dbReference type="FunCoup" id="Q45607">
    <property type="interactions" value="151"/>
</dbReference>
<dbReference type="STRING" id="224308.BSU40280"/>
<dbReference type="PaxDb" id="224308-BSU40280"/>
<dbReference type="DNASU" id="937766"/>
<dbReference type="EnsemblBacteria" id="CAB16065">
    <property type="protein sequence ID" value="CAB16065"/>
    <property type="gene ID" value="BSU_40280"/>
</dbReference>
<dbReference type="GeneID" id="937766"/>
<dbReference type="KEGG" id="bsu:BSU40280"/>
<dbReference type="PATRIC" id="fig|224308.179.peg.4358"/>
<dbReference type="eggNOG" id="COG3863">
    <property type="taxonomic scope" value="Bacteria"/>
</dbReference>
<dbReference type="InParanoid" id="Q45607"/>
<dbReference type="OrthoDB" id="3242865at2"/>
<dbReference type="BioCyc" id="BSUB:BSU40280-MONOMER"/>
<dbReference type="Proteomes" id="UP000001570">
    <property type="component" value="Chromosome"/>
</dbReference>
<dbReference type="Gene3D" id="3.90.1720.10">
    <property type="entry name" value="endopeptidase domain like (from Nostoc punctiforme)"/>
    <property type="match status" value="1"/>
</dbReference>
<dbReference type="InterPro" id="IPR038765">
    <property type="entry name" value="Papain-like_cys_pep_sf"/>
</dbReference>
<dbReference type="InterPro" id="IPR024453">
    <property type="entry name" value="Peptidase_C92"/>
</dbReference>
<dbReference type="Pfam" id="PF05708">
    <property type="entry name" value="Peptidase_C92"/>
    <property type="match status" value="1"/>
</dbReference>
<dbReference type="SUPFAM" id="SSF54001">
    <property type="entry name" value="Cysteine proteinases"/>
    <property type="match status" value="1"/>
</dbReference>
<protein>
    <recommendedName>
        <fullName>Uncharacterized protein YycO</fullName>
    </recommendedName>
</protein>
<accession>Q45607</accession>
<accession>Q794W3</accession>
<organism>
    <name type="scientific">Bacillus subtilis (strain 168)</name>
    <dbReference type="NCBI Taxonomy" id="224308"/>
    <lineage>
        <taxon>Bacteria</taxon>
        <taxon>Bacillati</taxon>
        <taxon>Bacillota</taxon>
        <taxon>Bacilli</taxon>
        <taxon>Bacillales</taxon>
        <taxon>Bacillaceae</taxon>
        <taxon>Bacillus</taxon>
    </lineage>
</organism>